<organism>
    <name type="scientific">Supella longipalpa</name>
    <name type="common">Brown-banded cockroach</name>
    <dbReference type="NCBI Taxonomy" id="83902"/>
    <lineage>
        <taxon>Eukaryota</taxon>
        <taxon>Metazoa</taxon>
        <taxon>Ecdysozoa</taxon>
        <taxon>Arthropoda</taxon>
        <taxon>Hexapoda</taxon>
        <taxon>Insecta</taxon>
        <taxon>Pterygota</taxon>
        <taxon>Neoptera</taxon>
        <taxon>Polyneoptera</taxon>
        <taxon>Dictyoptera</taxon>
        <taxon>Blattodea</taxon>
        <taxon>Blaberoidea</taxon>
        <taxon>Ectobiidae</taxon>
        <taxon>Plectopterinae</taxon>
        <taxon>Supella</taxon>
    </lineage>
</organism>
<evidence type="ECO:0000250" key="1">
    <source>
        <dbReference type="UniProtKB" id="P82617"/>
    </source>
</evidence>
<evidence type="ECO:0000255" key="2"/>
<evidence type="ECO:0000269" key="3">
    <source>
    </source>
</evidence>
<evidence type="ECO:0000303" key="4">
    <source>
    </source>
</evidence>
<evidence type="ECO:0000305" key="5"/>
<comment type="function">
    <text evidence="1">Myoactive.</text>
</comment>
<comment type="subcellular location">
    <subcellularLocation>
        <location evidence="5">Secreted</location>
    </subcellularLocation>
</comment>
<comment type="similarity">
    <text evidence="2">Belongs to the pyrokinin family.</text>
</comment>
<name>PPK5_SUPLO</name>
<protein>
    <recommendedName>
        <fullName evidence="1">Pyrokinin-5</fullName>
    </recommendedName>
    <alternativeName>
        <fullName evidence="1">FXPRL-amide</fullName>
    </alternativeName>
    <alternativeName>
        <fullName evidence="4">SupLo-Capa-PK</fullName>
    </alternativeName>
</protein>
<reference evidence="5" key="1">
    <citation type="journal article" date="2009" name="BMC Evol. Biol.">
        <title>A proteomic approach for studying insect phylogeny: CAPA peptides of ancient insect taxa (Dictyoptera, Blattoptera) as a test case.</title>
        <authorList>
            <person name="Roth S."/>
            <person name="Fromm B."/>
            <person name="Gaede G."/>
            <person name="Predel R."/>
        </authorList>
    </citation>
    <scope>PROTEIN SEQUENCE</scope>
    <scope>AMIDATION AT LEU-17</scope>
    <source>
        <tissue evidence="3">Abdominal perisympathetic organs</tissue>
    </source>
</reference>
<keyword id="KW-0027">Amidation</keyword>
<keyword id="KW-0903">Direct protein sequencing</keyword>
<keyword id="KW-0527">Neuropeptide</keyword>
<keyword id="KW-0964">Secreted</keyword>
<accession>P85781</accession>
<sequence length="17" mass="1710">GGGSSGETNGMWFGPRL</sequence>
<feature type="peptide" id="PRO_0000378725" description="Pyrokinin-5" evidence="3">
    <location>
        <begin position="1"/>
        <end position="17"/>
    </location>
</feature>
<feature type="modified residue" description="Leucine amide" evidence="3">
    <location>
        <position position="17"/>
    </location>
</feature>
<proteinExistence type="evidence at protein level"/>
<dbReference type="GO" id="GO:0005576">
    <property type="term" value="C:extracellular region"/>
    <property type="evidence" value="ECO:0007669"/>
    <property type="project" value="UniProtKB-SubCell"/>
</dbReference>
<dbReference type="GO" id="GO:0005184">
    <property type="term" value="F:neuropeptide hormone activity"/>
    <property type="evidence" value="ECO:0007669"/>
    <property type="project" value="InterPro"/>
</dbReference>
<dbReference type="GO" id="GO:0007218">
    <property type="term" value="P:neuropeptide signaling pathway"/>
    <property type="evidence" value="ECO:0007669"/>
    <property type="project" value="UniProtKB-KW"/>
</dbReference>
<dbReference type="InterPro" id="IPR001484">
    <property type="entry name" value="Pyrokinin_CS"/>
</dbReference>
<dbReference type="PROSITE" id="PS00539">
    <property type="entry name" value="PYROKININ"/>
    <property type="match status" value="1"/>
</dbReference>